<comment type="function">
    <text evidence="4">May play a role in intracellular membrane fusion.</text>
</comment>
<comment type="subunit">
    <text evidence="1 4">Associates with the BLOC-1 complex. Interacts with BLOC1S6 (By similarity). Forms a complex containing SNAP47, VAMP2 and STX1A.</text>
</comment>
<comment type="subcellular location">
    <subcellularLocation>
        <location evidence="4">Endomembrane system</location>
    </subcellularLocation>
    <subcellularLocation>
        <location evidence="4">Cytoplasm</location>
        <location evidence="4">Perinuclear region</location>
    </subcellularLocation>
    <text>Appears to be exclusively membrane-bound. In primary neurons, widely distributed in both cell bodies and neuronal processes.</text>
</comment>
<comment type="alternative products">
    <event type="alternative splicing"/>
    <isoform>
        <id>Q8R570-1</id>
        <name>1</name>
        <sequence type="displayed"/>
    </isoform>
    <isoform>
        <id>Q8R570-2</id>
        <name>2</name>
        <sequence type="described" ref="VSP_028615 VSP_028616"/>
    </isoform>
</comment>
<comment type="tissue specificity">
    <text evidence="4">Ubiquitously expressed with the most abundant expression in the brain. In brain, most highly expressed in the glomerular layer of the olfactory bulb, the cortex, striatum, hippocampus, and colliculi (at protein level).</text>
</comment>
<comment type="developmental stage">
    <text evidence="4">Expressed as early as 10 dpc in developing brain and reaches maximal levels at 18 dpc.</text>
</comment>
<comment type="similarity">
    <text evidence="6">Belongs to the SVAP1 family.</text>
</comment>
<comment type="sequence caution" evidence="6">
    <conflict type="frameshift">
        <sequence resource="EMBL-CDS" id="BAC35874"/>
    </conflict>
</comment>
<feature type="chain" id="PRO_0000307152" description="Synaptosomal-associated protein 47">
    <location>
        <begin position="1"/>
        <end position="413"/>
    </location>
</feature>
<feature type="domain" description="t-SNARE coiled-coil homology 1" evidence="2">
    <location>
        <begin position="109"/>
        <end position="171"/>
    </location>
</feature>
<feature type="domain" description="t-SNARE coiled-coil homology 2" evidence="2">
    <location>
        <begin position="350"/>
        <end position="412"/>
    </location>
</feature>
<feature type="region of interest" description="Disordered" evidence="3">
    <location>
        <begin position="321"/>
        <end position="342"/>
    </location>
</feature>
<feature type="splice variant" id="VSP_028615" description="In isoform 2." evidence="5">
    <original>RPKGCTPH</original>
    <variation>CHLFLIIS</variation>
    <location>
        <begin position="326"/>
        <end position="333"/>
    </location>
</feature>
<feature type="splice variant" id="VSP_028616" description="In isoform 2." evidence="5">
    <location>
        <begin position="334"/>
        <end position="413"/>
    </location>
</feature>
<feature type="sequence conflict" description="In Ref. 2; BAC35874." evidence="6" ref="2">
    <original>F</original>
    <variation>S</variation>
    <location>
        <position position="355"/>
    </location>
</feature>
<reference key="1">
    <citation type="journal article" date="2006" name="J. Biol. Chem.">
        <title>Identification of SNAP-47, a novel Qbc-SNARE with ubiquitous expression.</title>
        <authorList>
            <person name="Holt M."/>
            <person name="Varoqueaux F."/>
            <person name="Wiederhold K."/>
            <person name="Takamori S."/>
            <person name="Urlaub H."/>
            <person name="Fasshauer D."/>
            <person name="Jahn R."/>
        </authorList>
    </citation>
    <scope>NUCLEOTIDE SEQUENCE [MRNA] (ISOFORM 1)</scope>
    <scope>FUNCTION</scope>
    <scope>SUBUNIT</scope>
    <scope>SUBCELLULAR LOCATION</scope>
    <scope>TISSUE SPECIFICITY</scope>
    <scope>DEVELOPMENTAL STAGE</scope>
</reference>
<reference key="2">
    <citation type="journal article" date="2005" name="Science">
        <title>The transcriptional landscape of the mammalian genome.</title>
        <authorList>
            <person name="Carninci P."/>
            <person name="Kasukawa T."/>
            <person name="Katayama S."/>
            <person name="Gough J."/>
            <person name="Frith M.C."/>
            <person name="Maeda N."/>
            <person name="Oyama R."/>
            <person name="Ravasi T."/>
            <person name="Lenhard B."/>
            <person name="Wells C."/>
            <person name="Kodzius R."/>
            <person name="Shimokawa K."/>
            <person name="Bajic V.B."/>
            <person name="Brenner S.E."/>
            <person name="Batalov S."/>
            <person name="Forrest A.R."/>
            <person name="Zavolan M."/>
            <person name="Davis M.J."/>
            <person name="Wilming L.G."/>
            <person name="Aidinis V."/>
            <person name="Allen J.E."/>
            <person name="Ambesi-Impiombato A."/>
            <person name="Apweiler R."/>
            <person name="Aturaliya R.N."/>
            <person name="Bailey T.L."/>
            <person name="Bansal M."/>
            <person name="Baxter L."/>
            <person name="Beisel K.W."/>
            <person name="Bersano T."/>
            <person name="Bono H."/>
            <person name="Chalk A.M."/>
            <person name="Chiu K.P."/>
            <person name="Choudhary V."/>
            <person name="Christoffels A."/>
            <person name="Clutterbuck D.R."/>
            <person name="Crowe M.L."/>
            <person name="Dalla E."/>
            <person name="Dalrymple B.P."/>
            <person name="de Bono B."/>
            <person name="Della Gatta G."/>
            <person name="di Bernardo D."/>
            <person name="Down T."/>
            <person name="Engstrom P."/>
            <person name="Fagiolini M."/>
            <person name="Faulkner G."/>
            <person name="Fletcher C.F."/>
            <person name="Fukushima T."/>
            <person name="Furuno M."/>
            <person name="Futaki S."/>
            <person name="Gariboldi M."/>
            <person name="Georgii-Hemming P."/>
            <person name="Gingeras T.R."/>
            <person name="Gojobori T."/>
            <person name="Green R.E."/>
            <person name="Gustincich S."/>
            <person name="Harbers M."/>
            <person name="Hayashi Y."/>
            <person name="Hensch T.K."/>
            <person name="Hirokawa N."/>
            <person name="Hill D."/>
            <person name="Huminiecki L."/>
            <person name="Iacono M."/>
            <person name="Ikeo K."/>
            <person name="Iwama A."/>
            <person name="Ishikawa T."/>
            <person name="Jakt M."/>
            <person name="Kanapin A."/>
            <person name="Katoh M."/>
            <person name="Kawasawa Y."/>
            <person name="Kelso J."/>
            <person name="Kitamura H."/>
            <person name="Kitano H."/>
            <person name="Kollias G."/>
            <person name="Krishnan S.P."/>
            <person name="Kruger A."/>
            <person name="Kummerfeld S.K."/>
            <person name="Kurochkin I.V."/>
            <person name="Lareau L.F."/>
            <person name="Lazarevic D."/>
            <person name="Lipovich L."/>
            <person name="Liu J."/>
            <person name="Liuni S."/>
            <person name="McWilliam S."/>
            <person name="Madan Babu M."/>
            <person name="Madera M."/>
            <person name="Marchionni L."/>
            <person name="Matsuda H."/>
            <person name="Matsuzawa S."/>
            <person name="Miki H."/>
            <person name="Mignone F."/>
            <person name="Miyake S."/>
            <person name="Morris K."/>
            <person name="Mottagui-Tabar S."/>
            <person name="Mulder N."/>
            <person name="Nakano N."/>
            <person name="Nakauchi H."/>
            <person name="Ng P."/>
            <person name="Nilsson R."/>
            <person name="Nishiguchi S."/>
            <person name="Nishikawa S."/>
            <person name="Nori F."/>
            <person name="Ohara O."/>
            <person name="Okazaki Y."/>
            <person name="Orlando V."/>
            <person name="Pang K.C."/>
            <person name="Pavan W.J."/>
            <person name="Pavesi G."/>
            <person name="Pesole G."/>
            <person name="Petrovsky N."/>
            <person name="Piazza S."/>
            <person name="Reed J."/>
            <person name="Reid J.F."/>
            <person name="Ring B.Z."/>
            <person name="Ringwald M."/>
            <person name="Rost B."/>
            <person name="Ruan Y."/>
            <person name="Salzberg S.L."/>
            <person name="Sandelin A."/>
            <person name="Schneider C."/>
            <person name="Schoenbach C."/>
            <person name="Sekiguchi K."/>
            <person name="Semple C.A."/>
            <person name="Seno S."/>
            <person name="Sessa L."/>
            <person name="Sheng Y."/>
            <person name="Shibata Y."/>
            <person name="Shimada H."/>
            <person name="Shimada K."/>
            <person name="Silva D."/>
            <person name="Sinclair B."/>
            <person name="Sperling S."/>
            <person name="Stupka E."/>
            <person name="Sugiura K."/>
            <person name="Sultana R."/>
            <person name="Takenaka Y."/>
            <person name="Taki K."/>
            <person name="Tammoja K."/>
            <person name="Tan S.L."/>
            <person name="Tang S."/>
            <person name="Taylor M.S."/>
            <person name="Tegner J."/>
            <person name="Teichmann S.A."/>
            <person name="Ueda H.R."/>
            <person name="van Nimwegen E."/>
            <person name="Verardo R."/>
            <person name="Wei C.L."/>
            <person name="Yagi K."/>
            <person name="Yamanishi H."/>
            <person name="Zabarovsky E."/>
            <person name="Zhu S."/>
            <person name="Zimmer A."/>
            <person name="Hide W."/>
            <person name="Bult C."/>
            <person name="Grimmond S.M."/>
            <person name="Teasdale R.D."/>
            <person name="Liu E.T."/>
            <person name="Brusic V."/>
            <person name="Quackenbush J."/>
            <person name="Wahlestedt C."/>
            <person name="Mattick J.S."/>
            <person name="Hume D.A."/>
            <person name="Kai C."/>
            <person name="Sasaki D."/>
            <person name="Tomaru Y."/>
            <person name="Fukuda S."/>
            <person name="Kanamori-Katayama M."/>
            <person name="Suzuki M."/>
            <person name="Aoki J."/>
            <person name="Arakawa T."/>
            <person name="Iida J."/>
            <person name="Imamura K."/>
            <person name="Itoh M."/>
            <person name="Kato T."/>
            <person name="Kawaji H."/>
            <person name="Kawagashira N."/>
            <person name="Kawashima T."/>
            <person name="Kojima M."/>
            <person name="Kondo S."/>
            <person name="Konno H."/>
            <person name="Nakano K."/>
            <person name="Ninomiya N."/>
            <person name="Nishio T."/>
            <person name="Okada M."/>
            <person name="Plessy C."/>
            <person name="Shibata K."/>
            <person name="Shiraki T."/>
            <person name="Suzuki S."/>
            <person name="Tagami M."/>
            <person name="Waki K."/>
            <person name="Watahiki A."/>
            <person name="Okamura-Oho Y."/>
            <person name="Suzuki H."/>
            <person name="Kawai J."/>
            <person name="Hayashizaki Y."/>
        </authorList>
    </citation>
    <scope>NUCLEOTIDE SEQUENCE [LARGE SCALE MRNA] (ISOFORMS 1 AND 2)</scope>
    <source>
        <strain>C3H/HeJ</strain>
        <strain>C57BL/6J</strain>
        <tissue>Brain</tissue>
        <tissue>Cerebellum</tissue>
        <tissue>Embryo</tissue>
        <tissue>Embryonic stem cell</tissue>
    </source>
</reference>
<reference key="3">
    <citation type="journal article" date="2009" name="PLoS Biol.">
        <title>Lineage-specific biology revealed by a finished genome assembly of the mouse.</title>
        <authorList>
            <person name="Church D.M."/>
            <person name="Goodstadt L."/>
            <person name="Hillier L.W."/>
            <person name="Zody M.C."/>
            <person name="Goldstein S."/>
            <person name="She X."/>
            <person name="Bult C.J."/>
            <person name="Agarwala R."/>
            <person name="Cherry J.L."/>
            <person name="DiCuccio M."/>
            <person name="Hlavina W."/>
            <person name="Kapustin Y."/>
            <person name="Meric P."/>
            <person name="Maglott D."/>
            <person name="Birtle Z."/>
            <person name="Marques A.C."/>
            <person name="Graves T."/>
            <person name="Zhou S."/>
            <person name="Teague B."/>
            <person name="Potamousis K."/>
            <person name="Churas C."/>
            <person name="Place M."/>
            <person name="Herschleb J."/>
            <person name="Runnheim R."/>
            <person name="Forrest D."/>
            <person name="Amos-Landgraf J."/>
            <person name="Schwartz D.C."/>
            <person name="Cheng Z."/>
            <person name="Lindblad-Toh K."/>
            <person name="Eichler E.E."/>
            <person name="Ponting C.P."/>
        </authorList>
    </citation>
    <scope>NUCLEOTIDE SEQUENCE [LARGE SCALE GENOMIC DNA]</scope>
    <source>
        <strain>C57BL/6J</strain>
    </source>
</reference>
<reference key="4">
    <citation type="journal article" date="2004" name="Genome Res.">
        <title>The status, quality, and expansion of the NIH full-length cDNA project: the Mammalian Gene Collection (MGC).</title>
        <authorList>
            <consortium name="The MGC Project Team"/>
        </authorList>
    </citation>
    <scope>NUCLEOTIDE SEQUENCE [LARGE SCALE MRNA] (ISOFORM 1)</scope>
    <source>
        <strain>Czech II</strain>
        <strain>FVB/N</strain>
        <tissue>Mammary tumor</tissue>
    </source>
</reference>
<reference key="5">
    <citation type="journal article" date="2010" name="Cell">
        <title>A tissue-specific atlas of mouse protein phosphorylation and expression.</title>
        <authorList>
            <person name="Huttlin E.L."/>
            <person name="Jedrychowski M.P."/>
            <person name="Elias J.E."/>
            <person name="Goswami T."/>
            <person name="Rad R."/>
            <person name="Beausoleil S.A."/>
            <person name="Villen J."/>
            <person name="Haas W."/>
            <person name="Sowa M.E."/>
            <person name="Gygi S.P."/>
        </authorList>
    </citation>
    <scope>IDENTIFICATION BY MASS SPECTROMETRY [LARGE SCALE ANALYSIS]</scope>
    <source>
        <tissue>Brain</tissue>
        <tissue>Kidney</tissue>
        <tissue>Liver</tissue>
        <tissue>Lung</tissue>
        <tissue>Pancreas</tissue>
        <tissue>Spleen</tissue>
    </source>
</reference>
<sequence length="413" mass="46524">MSSDMRVHSWSCSYYLDLEKQWVSGKLTLTPHSLKFIVEKTEEVLVGLPLSSIIEIRKESSLFIFGAITVLEKGQTKHWFSSLQPSRNVVFNVIEHFWRELLLSQPGTAANIPSHVTRGQELIGLMANSQKRMEDTAKDLQQQSEQLDSVLKGLEKMESDLDVADRLLTELETPSWWPFGSKFWKMPAEENLKEGVSSTCEPFGKEGVVITVPAIISERAESHSKLGKLTVLVSALEIYDSCSLLLHRFEKEDVDDIKVHSPYEVSIRQRFIGKPDVAYQLISAKMPEVIPILEVQFSSKIELLEDALVLRNKVFASSAERHAASRPKGCTPHRELPTGGQEGEQLQLQKNLPLFSEGEAQELTQILSKMKGLALDTEAELERQDAALDGITVAVDRATLNVDKQNRRMRKLM</sequence>
<organism>
    <name type="scientific">Mus musculus</name>
    <name type="common">Mouse</name>
    <dbReference type="NCBI Taxonomy" id="10090"/>
    <lineage>
        <taxon>Eukaryota</taxon>
        <taxon>Metazoa</taxon>
        <taxon>Chordata</taxon>
        <taxon>Craniata</taxon>
        <taxon>Vertebrata</taxon>
        <taxon>Euteleostomi</taxon>
        <taxon>Mammalia</taxon>
        <taxon>Eutheria</taxon>
        <taxon>Euarchontoglires</taxon>
        <taxon>Glires</taxon>
        <taxon>Rodentia</taxon>
        <taxon>Myomorpha</taxon>
        <taxon>Muroidea</taxon>
        <taxon>Muridae</taxon>
        <taxon>Murinae</taxon>
        <taxon>Mus</taxon>
        <taxon>Mus</taxon>
    </lineage>
</organism>
<accession>Q8R570</accession>
<accession>Q3UNK4</accession>
<accession>Q8BK87</accession>
<evidence type="ECO:0000250" key="1"/>
<evidence type="ECO:0000255" key="2">
    <source>
        <dbReference type="PROSITE-ProRule" id="PRU00202"/>
    </source>
</evidence>
<evidence type="ECO:0000256" key="3">
    <source>
        <dbReference type="SAM" id="MobiDB-lite"/>
    </source>
</evidence>
<evidence type="ECO:0000269" key="4">
    <source>
    </source>
</evidence>
<evidence type="ECO:0000303" key="5">
    <source>
    </source>
</evidence>
<evidence type="ECO:0000305" key="6"/>
<name>SNP47_MOUSE</name>
<protein>
    <recommendedName>
        <fullName>Synaptosomal-associated protein 47</fullName>
        <shortName>SNAP-47</shortName>
    </recommendedName>
    <alternativeName>
        <fullName>Synaptosomal-associated 47 kDa protein</fullName>
    </alternativeName>
</protein>
<dbReference type="EMBL" id="AK028053">
    <property type="protein sequence ID" value="BAC25723.1"/>
    <property type="molecule type" value="mRNA"/>
</dbReference>
<dbReference type="EMBL" id="AK049330">
    <property type="protein sequence ID" value="BAC33686.1"/>
    <property type="molecule type" value="mRNA"/>
</dbReference>
<dbReference type="EMBL" id="AK075640">
    <property type="protein sequence ID" value="BAC35874.1"/>
    <property type="status" value="ALT_FRAME"/>
    <property type="molecule type" value="mRNA"/>
</dbReference>
<dbReference type="EMBL" id="AK144165">
    <property type="protein sequence ID" value="BAE25743.1"/>
    <property type="molecule type" value="mRNA"/>
</dbReference>
<dbReference type="EMBL" id="AL713994">
    <property type="status" value="NOT_ANNOTATED_CDS"/>
    <property type="molecule type" value="Genomic_DNA"/>
</dbReference>
<dbReference type="EMBL" id="BC023182">
    <property type="protein sequence ID" value="AAH23182.1"/>
    <property type="molecule type" value="mRNA"/>
</dbReference>
<dbReference type="EMBL" id="BC029025">
    <property type="protein sequence ID" value="AAH29025.1"/>
    <property type="molecule type" value="mRNA"/>
</dbReference>
<dbReference type="CCDS" id="CCDS24767.1">
    <molecule id="Q8R570-1"/>
</dbReference>
<dbReference type="RefSeq" id="NP_001343381.1">
    <molecule id="Q8R570-1"/>
    <property type="nucleotide sequence ID" value="NM_001356452.1"/>
</dbReference>
<dbReference type="RefSeq" id="NP_653104.1">
    <molecule id="Q8R570-1"/>
    <property type="nucleotide sequence ID" value="NM_144521.3"/>
</dbReference>
<dbReference type="RefSeq" id="XP_006534084.1">
    <property type="nucleotide sequence ID" value="XM_006534021.2"/>
</dbReference>
<dbReference type="RefSeq" id="XP_006534085.1">
    <molecule id="Q8R570-1"/>
    <property type="nucleotide sequence ID" value="XM_006534022.5"/>
</dbReference>
<dbReference type="RefSeq" id="XP_006534086.1">
    <molecule id="Q8R570-1"/>
    <property type="nucleotide sequence ID" value="XM_006534023.2"/>
</dbReference>
<dbReference type="RefSeq" id="XP_006534087.1">
    <molecule id="Q8R570-1"/>
    <property type="nucleotide sequence ID" value="XM_006534024.5"/>
</dbReference>
<dbReference type="RefSeq" id="XP_030102111.1">
    <molecule id="Q8R570-1"/>
    <property type="nucleotide sequence ID" value="XM_030246251.2"/>
</dbReference>
<dbReference type="RefSeq" id="XP_030102112.1">
    <molecule id="Q8R570-1"/>
    <property type="nucleotide sequence ID" value="XM_030246252.2"/>
</dbReference>
<dbReference type="RefSeq" id="XP_030102113.1">
    <molecule id="Q8R570-1"/>
    <property type="nucleotide sequence ID" value="XM_030246253.2"/>
</dbReference>
<dbReference type="RefSeq" id="XP_030102114.1">
    <molecule id="Q8R570-1"/>
    <property type="nucleotide sequence ID" value="XM_030246254.2"/>
</dbReference>
<dbReference type="RefSeq" id="XP_036012812.1">
    <molecule id="Q8R570-1"/>
    <property type="nucleotide sequence ID" value="XM_036156919.1"/>
</dbReference>
<dbReference type="SMR" id="Q8R570"/>
<dbReference type="BioGRID" id="212462">
    <property type="interactions" value="14"/>
</dbReference>
<dbReference type="FunCoup" id="Q8R570">
    <property type="interactions" value="775"/>
</dbReference>
<dbReference type="IntAct" id="Q8R570">
    <property type="interactions" value="1"/>
</dbReference>
<dbReference type="STRING" id="10090.ENSMUSP00000010038"/>
<dbReference type="GlyGen" id="Q8R570">
    <property type="glycosylation" value="2 sites, 1 O-linked glycan (1 site)"/>
</dbReference>
<dbReference type="iPTMnet" id="Q8R570"/>
<dbReference type="PhosphoSitePlus" id="Q8R570"/>
<dbReference type="SwissPalm" id="Q8R570"/>
<dbReference type="jPOST" id="Q8R570"/>
<dbReference type="PaxDb" id="10090-ENSMUSP00000010038"/>
<dbReference type="PeptideAtlas" id="Q8R570"/>
<dbReference type="ProteomicsDB" id="261389">
    <molecule id="Q8R570-1"/>
</dbReference>
<dbReference type="ProteomicsDB" id="261390">
    <molecule id="Q8R570-2"/>
</dbReference>
<dbReference type="Pumba" id="Q8R570"/>
<dbReference type="Antibodypedia" id="34657">
    <property type="antibodies" value="41 antibodies from 16 providers"/>
</dbReference>
<dbReference type="DNASU" id="67826"/>
<dbReference type="Ensembl" id="ENSMUST00000010038.10">
    <molecule id="Q8R570-1"/>
    <property type="protein sequence ID" value="ENSMUSP00000010038.4"/>
    <property type="gene ID" value="ENSMUSG00000009894.16"/>
</dbReference>
<dbReference type="GeneID" id="67826"/>
<dbReference type="KEGG" id="mmu:67826"/>
<dbReference type="UCSC" id="uc007jds.1">
    <molecule id="Q8R570-1"/>
    <property type="organism name" value="mouse"/>
</dbReference>
<dbReference type="AGR" id="MGI:1915076"/>
<dbReference type="CTD" id="116841"/>
<dbReference type="MGI" id="MGI:1915076">
    <property type="gene designation" value="Snap47"/>
</dbReference>
<dbReference type="VEuPathDB" id="HostDB:ENSMUSG00000009894"/>
<dbReference type="eggNOG" id="KOG3065">
    <property type="taxonomic scope" value="Eukaryota"/>
</dbReference>
<dbReference type="GeneTree" id="ENSGT00950000182843"/>
<dbReference type="InParanoid" id="Q8R570"/>
<dbReference type="OMA" id="DICIHTW"/>
<dbReference type="OrthoDB" id="10009801at2759"/>
<dbReference type="PhylomeDB" id="Q8R570"/>
<dbReference type="TreeFam" id="TF331066"/>
<dbReference type="BioGRID-ORCS" id="67826">
    <property type="hits" value="2 hits in 77 CRISPR screens"/>
</dbReference>
<dbReference type="CD-CODE" id="CE726F99">
    <property type="entry name" value="Postsynaptic density"/>
</dbReference>
<dbReference type="ChiTaRS" id="Snap47">
    <property type="organism name" value="mouse"/>
</dbReference>
<dbReference type="PRO" id="PR:Q8R570"/>
<dbReference type="Proteomes" id="UP000000589">
    <property type="component" value="Chromosome 11"/>
</dbReference>
<dbReference type="RNAct" id="Q8R570">
    <property type="molecule type" value="protein"/>
</dbReference>
<dbReference type="Bgee" id="ENSMUSG00000009894">
    <property type="expression patterns" value="Expressed in facial nucleus and 261 other cell types or tissues"/>
</dbReference>
<dbReference type="ExpressionAtlas" id="Q8R570">
    <property type="expression patterns" value="baseline and differential"/>
</dbReference>
<dbReference type="GO" id="GO:0030425">
    <property type="term" value="C:dendrite"/>
    <property type="evidence" value="ECO:0000314"/>
    <property type="project" value="MGI"/>
</dbReference>
<dbReference type="GO" id="GO:0012505">
    <property type="term" value="C:endomembrane system"/>
    <property type="evidence" value="ECO:0007669"/>
    <property type="project" value="UniProtKB-SubCell"/>
</dbReference>
<dbReference type="GO" id="GO:0098978">
    <property type="term" value="C:glutamatergic synapse"/>
    <property type="evidence" value="ECO:0000314"/>
    <property type="project" value="SynGO"/>
</dbReference>
<dbReference type="GO" id="GO:0098686">
    <property type="term" value="C:hippocampal mossy fiber to CA3 synapse"/>
    <property type="evidence" value="ECO:0007669"/>
    <property type="project" value="Ensembl"/>
</dbReference>
<dbReference type="GO" id="GO:0016020">
    <property type="term" value="C:membrane"/>
    <property type="evidence" value="ECO:0000314"/>
    <property type="project" value="MGI"/>
</dbReference>
<dbReference type="GO" id="GO:0043025">
    <property type="term" value="C:neuronal cell body"/>
    <property type="evidence" value="ECO:0000314"/>
    <property type="project" value="MGI"/>
</dbReference>
<dbReference type="GO" id="GO:0048471">
    <property type="term" value="C:perinuclear region of cytoplasm"/>
    <property type="evidence" value="ECO:0007669"/>
    <property type="project" value="UniProtKB-SubCell"/>
</dbReference>
<dbReference type="GO" id="GO:0014069">
    <property type="term" value="C:postsynaptic density"/>
    <property type="evidence" value="ECO:0007669"/>
    <property type="project" value="Ensembl"/>
</dbReference>
<dbReference type="GO" id="GO:0048786">
    <property type="term" value="C:presynaptic active zone"/>
    <property type="evidence" value="ECO:0007669"/>
    <property type="project" value="Ensembl"/>
</dbReference>
<dbReference type="GO" id="GO:0098967">
    <property type="term" value="P:exocytic insertion of neurotransmitter receptor to postsynaptic membrane"/>
    <property type="evidence" value="ECO:0000314"/>
    <property type="project" value="SynGO"/>
</dbReference>
<dbReference type="GO" id="GO:0060291">
    <property type="term" value="P:long-term synaptic potentiation"/>
    <property type="evidence" value="ECO:0000315"/>
    <property type="project" value="MGI"/>
</dbReference>
<dbReference type="GO" id="GO:0099003">
    <property type="term" value="P:vesicle-mediated transport in synapse"/>
    <property type="evidence" value="ECO:0000314"/>
    <property type="project" value="SynGO"/>
</dbReference>
<dbReference type="CDD" id="cd15888">
    <property type="entry name" value="SNARE_SNAP47N"/>
    <property type="match status" value="1"/>
</dbReference>
<dbReference type="FunFam" id="2.30.29.30:FF:000269">
    <property type="entry name" value="Synaptosomal-associated protein 47"/>
    <property type="match status" value="1"/>
</dbReference>
<dbReference type="FunFam" id="1.20.5.110:FF:000052">
    <property type="entry name" value="synaptosomal-associated protein 47"/>
    <property type="match status" value="1"/>
</dbReference>
<dbReference type="Gene3D" id="1.20.5.110">
    <property type="match status" value="2"/>
</dbReference>
<dbReference type="Gene3D" id="2.30.29.30">
    <property type="entry name" value="Pleckstrin-homology domain (PH domain)/Phosphotyrosine-binding domain (PTB)"/>
    <property type="match status" value="1"/>
</dbReference>
<dbReference type="InterPro" id="IPR011993">
    <property type="entry name" value="PH-like_dom_sf"/>
</dbReference>
<dbReference type="InterPro" id="IPR000727">
    <property type="entry name" value="T_SNARE_dom"/>
</dbReference>
<dbReference type="PANTHER" id="PTHR19305">
    <property type="entry name" value="SYNAPTOSOMAL ASSOCIATED PROTEIN"/>
    <property type="match status" value="1"/>
</dbReference>
<dbReference type="PANTHER" id="PTHR19305:SF1">
    <property type="entry name" value="SYNAPTOSOMAL-ASSOCIATED PROTEIN 47"/>
    <property type="match status" value="1"/>
</dbReference>
<dbReference type="SUPFAM" id="SSF58038">
    <property type="entry name" value="SNARE fusion complex"/>
    <property type="match status" value="2"/>
</dbReference>
<dbReference type="PROSITE" id="PS50192">
    <property type="entry name" value="T_SNARE"/>
    <property type="match status" value="2"/>
</dbReference>
<proteinExistence type="evidence at protein level"/>
<keyword id="KW-0025">Alternative splicing</keyword>
<keyword id="KW-0175">Coiled coil</keyword>
<keyword id="KW-0963">Cytoplasm</keyword>
<keyword id="KW-0472">Membrane</keyword>
<keyword id="KW-1185">Reference proteome</keyword>
<keyword id="KW-0677">Repeat</keyword>
<gene>
    <name type="primary">Snap47</name>
</gene>